<feature type="chain" id="PRO_0000100422" description="Phosphoribosylformylglycinamidine synthase">
    <location>
        <begin position="1"/>
        <end position="1297"/>
    </location>
</feature>
<feature type="domain" description="Glutamine amidotransferase type-1" evidence="1">
    <location>
        <begin position="1044"/>
        <end position="1297"/>
    </location>
</feature>
<feature type="active site" description="Nucleophile" evidence="1">
    <location>
        <position position="1137"/>
    </location>
</feature>
<feature type="active site" evidence="1">
    <location>
        <position position="1262"/>
    </location>
</feature>
<feature type="active site" evidence="1">
    <location>
        <position position="1264"/>
    </location>
</feature>
<feature type="binding site" evidence="1">
    <location>
        <begin position="307"/>
        <end position="318"/>
    </location>
    <ligand>
        <name>ATP</name>
        <dbReference type="ChEBI" id="CHEBI:30616"/>
    </ligand>
</feature>
<feature type="binding site" evidence="1">
    <location>
        <position position="678"/>
    </location>
    <ligand>
        <name>ATP</name>
        <dbReference type="ChEBI" id="CHEBI:30616"/>
    </ligand>
</feature>
<feature type="binding site" evidence="1">
    <location>
        <position position="718"/>
    </location>
    <ligand>
        <name>Mg(2+)</name>
        <dbReference type="ChEBI" id="CHEBI:18420"/>
    </ligand>
</feature>
<feature type="binding site" evidence="1">
    <location>
        <position position="722"/>
    </location>
    <ligand>
        <name>Mg(2+)</name>
        <dbReference type="ChEBI" id="CHEBI:18420"/>
    </ligand>
</feature>
<feature type="binding site" evidence="1">
    <location>
        <position position="886"/>
    </location>
    <ligand>
        <name>Mg(2+)</name>
        <dbReference type="ChEBI" id="CHEBI:18420"/>
    </ligand>
</feature>
<sequence length="1297" mass="140847">MRILRGSPALSEFRVNKLLELCREQDLPVTGIYAEFMHFADLTSELDAEALEKLEKLLTYGPTIEEHEPQGLLLLVTPRPGTISPWSSKATDIAQNCGLNAVKRLERGTAYYVESSSELSSVQIDIVKSIIHDRMMEAVFGDLEAAAALFSVAQPAPMTQVDILSGGRLALEEANVSLGLALAEDEIDYLVENFTKLGRNPNDIELMMFAQANSEHCRHKIFNADWTIDGVEQPKSLFKMIKNTFETTPDHVLSAYKDNAAVMTGSKVGRFFPDPETRQYNYHHEDAHILMKVETHNHPTAISPWPGASTGSGGEIRDEGATGIGGKPKAGLVGFTTSNLRIPGFEQPWETDFGKPGRIVNALDIMLEGPLGGAAFNNEFGRPNLLGYFRTYEEKVTSHAGEEVRGYHKPIMIAGGMGNIRDEHVQKKEIPVGASLIVLGGPAMNIGLGGGAASSMASGQSAEDLDFASVQRENPEMERRCQEVIDRCWQLGDNNPIAFIHDVGAGGISNALPELVNDGERGGKFQLRDVPNDEPGMSPLEIWCNESQERYVLAVAPENMAAFDAICKRERAPYAVVGVATEERHLTLEDAHFDNTPIDMPMDILLGKPPKMHREATTLKVDSPAMTRDGIELNEAVDRVLRLPTVAEKTFLITIGDRTVTGLVARDQMVGPWQVPVANCAVTAASYDTYHGEAMSMGERTPVALLDFGASARLAVGESLTNIAATDIGDIKRIKLSANWMSPAGHPGEDAGLYEAVKAVGEELCPALGLTIPVGKDSMSMKTKWNENGEEKEVTSPLSLIITAFARVEDVRKTITPQLRTDKGETSLVLVDLGNGKNRLGATALAQVYKQLGDKPADVDNAEQLKGFFDAMQALVRQDKLLAYHDKGDGGLLVTLAEMAFAGHCGVNANIAALGDDVLAALFNEELGAVVQVKNDELDSVLSTLAANGLEACSHVIGAIDASDNFVIRSGDAVILERSRTDLRVIWAETTHKMQALRDNPACADQEFEAKKDNSDPGLNVSLSFDVNEDIAAPYIAKGAKPKMAILREQGVNSHVEMAAAFDRAGFEATDIHMSDILTGQAVLDEYHGLVACGGFSYGDVLGAGEGWAKSVLFNAQAREQFQAFFNRENTFSLGVCNGCQMLSNLKELIPGADLWPRFVRNESERFEARFSLVEVQKSDSVFFDGMAGSRMPIAVSHGEGRVEVRDAQHLAAIEASGTVAVRFVDNLGNPTQQYPNNPNGSPNAITGLTTKDGRVTIMMPHPERVFRTVANSWAPEGWGENGAWMRMFQNARKNLG</sequence>
<protein>
    <recommendedName>
        <fullName evidence="1">Phosphoribosylformylglycinamidine synthase</fullName>
        <shortName evidence="1">FGAM synthase</shortName>
        <shortName evidence="1">FGAMS</shortName>
        <ecNumber evidence="1">6.3.5.3</ecNumber>
    </recommendedName>
    <alternativeName>
        <fullName evidence="1">Formylglycinamide ribonucleotide amidotransferase</fullName>
        <shortName evidence="1">FGAR amidotransferase</shortName>
        <shortName evidence="1">FGAR-AT</shortName>
    </alternativeName>
</protein>
<dbReference type="EC" id="6.3.5.3" evidence="1"/>
<dbReference type="EMBL" id="AE016795">
    <property type="protein sequence ID" value="AAO08867.1"/>
    <property type="molecule type" value="Genomic_DNA"/>
</dbReference>
<dbReference type="RefSeq" id="WP_011078440.1">
    <property type="nucleotide sequence ID" value="NC_004459.3"/>
</dbReference>
<dbReference type="SMR" id="Q8DF81"/>
<dbReference type="KEGG" id="vvu:VV1_0340"/>
<dbReference type="HOGENOM" id="CLU_001031_0_2_6"/>
<dbReference type="UniPathway" id="UPA00074">
    <property type="reaction ID" value="UER00128"/>
</dbReference>
<dbReference type="Proteomes" id="UP000002275">
    <property type="component" value="Chromosome 1"/>
</dbReference>
<dbReference type="GO" id="GO:0005737">
    <property type="term" value="C:cytoplasm"/>
    <property type="evidence" value="ECO:0007669"/>
    <property type="project" value="UniProtKB-SubCell"/>
</dbReference>
<dbReference type="GO" id="GO:0005524">
    <property type="term" value="F:ATP binding"/>
    <property type="evidence" value="ECO:0007669"/>
    <property type="project" value="UniProtKB-UniRule"/>
</dbReference>
<dbReference type="GO" id="GO:0046872">
    <property type="term" value="F:metal ion binding"/>
    <property type="evidence" value="ECO:0007669"/>
    <property type="project" value="UniProtKB-KW"/>
</dbReference>
<dbReference type="GO" id="GO:0004642">
    <property type="term" value="F:phosphoribosylformylglycinamidine synthase activity"/>
    <property type="evidence" value="ECO:0007669"/>
    <property type="project" value="UniProtKB-UniRule"/>
</dbReference>
<dbReference type="GO" id="GO:0006189">
    <property type="term" value="P:'de novo' IMP biosynthetic process"/>
    <property type="evidence" value="ECO:0007669"/>
    <property type="project" value="UniProtKB-UniRule"/>
</dbReference>
<dbReference type="CDD" id="cd01740">
    <property type="entry name" value="GATase1_FGAR_AT"/>
    <property type="match status" value="1"/>
</dbReference>
<dbReference type="CDD" id="cd02203">
    <property type="entry name" value="PurL_repeat1"/>
    <property type="match status" value="1"/>
</dbReference>
<dbReference type="FunFam" id="1.10.8.750:FF:000002">
    <property type="entry name" value="Phosphoribosylformylglycinamidine synthase"/>
    <property type="match status" value="1"/>
</dbReference>
<dbReference type="FunFam" id="3.30.1330.10:FF:000002">
    <property type="entry name" value="Phosphoribosylformylglycinamidine synthase"/>
    <property type="match status" value="1"/>
</dbReference>
<dbReference type="FunFam" id="3.30.1330.10:FF:000005">
    <property type="entry name" value="Phosphoribosylformylglycinamidine synthase"/>
    <property type="match status" value="1"/>
</dbReference>
<dbReference type="FunFam" id="3.40.50.880:FF:000008">
    <property type="entry name" value="Phosphoribosylformylglycinamidine synthase"/>
    <property type="match status" value="1"/>
</dbReference>
<dbReference type="FunFam" id="3.90.650.10:FF:000002">
    <property type="entry name" value="Phosphoribosylformylglycinamidine synthase"/>
    <property type="match status" value="1"/>
</dbReference>
<dbReference type="FunFam" id="3.90.650.10:FF:000005">
    <property type="entry name" value="Phosphoribosylformylglycinamidine synthase"/>
    <property type="match status" value="1"/>
</dbReference>
<dbReference type="Gene3D" id="3.40.50.880">
    <property type="match status" value="1"/>
</dbReference>
<dbReference type="Gene3D" id="1.10.8.750">
    <property type="entry name" value="Phosphoribosylformylglycinamidine synthase, linker domain"/>
    <property type="match status" value="1"/>
</dbReference>
<dbReference type="Gene3D" id="3.90.650.10">
    <property type="entry name" value="PurM-like C-terminal domain"/>
    <property type="match status" value="2"/>
</dbReference>
<dbReference type="Gene3D" id="3.30.1330.10">
    <property type="entry name" value="PurM-like, N-terminal domain"/>
    <property type="match status" value="2"/>
</dbReference>
<dbReference type="HAMAP" id="MF_00419">
    <property type="entry name" value="PurL_1"/>
    <property type="match status" value="1"/>
</dbReference>
<dbReference type="InterPro" id="IPR029062">
    <property type="entry name" value="Class_I_gatase-like"/>
</dbReference>
<dbReference type="InterPro" id="IPR040707">
    <property type="entry name" value="FGAR-AT_N"/>
</dbReference>
<dbReference type="InterPro" id="IPR055181">
    <property type="entry name" value="FGAR-AT_PurM_N-like"/>
</dbReference>
<dbReference type="InterPro" id="IPR010073">
    <property type="entry name" value="PurL_large"/>
</dbReference>
<dbReference type="InterPro" id="IPR041609">
    <property type="entry name" value="PurL_linker"/>
</dbReference>
<dbReference type="InterPro" id="IPR010918">
    <property type="entry name" value="PurM-like_C_dom"/>
</dbReference>
<dbReference type="InterPro" id="IPR036676">
    <property type="entry name" value="PurM-like_C_sf"/>
</dbReference>
<dbReference type="InterPro" id="IPR036921">
    <property type="entry name" value="PurM-like_N_sf"/>
</dbReference>
<dbReference type="InterPro" id="IPR036604">
    <property type="entry name" value="PurS-like_sf"/>
</dbReference>
<dbReference type="NCBIfam" id="TIGR01735">
    <property type="entry name" value="FGAM_synt"/>
    <property type="match status" value="1"/>
</dbReference>
<dbReference type="NCBIfam" id="NF003672">
    <property type="entry name" value="PRK05297.1"/>
    <property type="match status" value="1"/>
</dbReference>
<dbReference type="PANTHER" id="PTHR10099">
    <property type="entry name" value="PHOSPHORIBOSYLFORMYLGLYCINAMIDINE SYNTHASE"/>
    <property type="match status" value="1"/>
</dbReference>
<dbReference type="PANTHER" id="PTHR10099:SF1">
    <property type="entry name" value="PHOSPHORIBOSYLFORMYLGLYCINAMIDINE SYNTHASE"/>
    <property type="match status" value="1"/>
</dbReference>
<dbReference type="Pfam" id="PF02769">
    <property type="entry name" value="AIRS_C"/>
    <property type="match status" value="2"/>
</dbReference>
<dbReference type="Pfam" id="PF18072">
    <property type="entry name" value="FGAR-AT_linker"/>
    <property type="match status" value="1"/>
</dbReference>
<dbReference type="Pfam" id="PF18076">
    <property type="entry name" value="FGAR-AT_N"/>
    <property type="match status" value="1"/>
</dbReference>
<dbReference type="Pfam" id="PF22689">
    <property type="entry name" value="FGAR-AT_PurM_N-like"/>
    <property type="match status" value="1"/>
</dbReference>
<dbReference type="Pfam" id="PF13507">
    <property type="entry name" value="GATase_5"/>
    <property type="match status" value="1"/>
</dbReference>
<dbReference type="SMART" id="SM01211">
    <property type="entry name" value="GATase_5"/>
    <property type="match status" value="1"/>
</dbReference>
<dbReference type="SUPFAM" id="SSF52317">
    <property type="entry name" value="Class I glutamine amidotransferase-like"/>
    <property type="match status" value="1"/>
</dbReference>
<dbReference type="SUPFAM" id="SSF109736">
    <property type="entry name" value="FGAM synthase PurL, linker domain"/>
    <property type="match status" value="1"/>
</dbReference>
<dbReference type="SUPFAM" id="SSF56042">
    <property type="entry name" value="PurM C-terminal domain-like"/>
    <property type="match status" value="2"/>
</dbReference>
<dbReference type="SUPFAM" id="SSF55326">
    <property type="entry name" value="PurM N-terminal domain-like"/>
    <property type="match status" value="2"/>
</dbReference>
<dbReference type="SUPFAM" id="SSF82697">
    <property type="entry name" value="PurS-like"/>
    <property type="match status" value="1"/>
</dbReference>
<dbReference type="PROSITE" id="PS51273">
    <property type="entry name" value="GATASE_TYPE_1"/>
    <property type="match status" value="1"/>
</dbReference>
<organism>
    <name type="scientific">Vibrio vulnificus (strain CMCP6)</name>
    <dbReference type="NCBI Taxonomy" id="216895"/>
    <lineage>
        <taxon>Bacteria</taxon>
        <taxon>Pseudomonadati</taxon>
        <taxon>Pseudomonadota</taxon>
        <taxon>Gammaproteobacteria</taxon>
        <taxon>Vibrionales</taxon>
        <taxon>Vibrionaceae</taxon>
        <taxon>Vibrio</taxon>
    </lineage>
</organism>
<comment type="function">
    <text evidence="1">Phosphoribosylformylglycinamidine synthase involved in the purines biosynthetic pathway. Catalyzes the ATP-dependent conversion of formylglycinamide ribonucleotide (FGAR) and glutamine to yield formylglycinamidine ribonucleotide (FGAM) and glutamate.</text>
</comment>
<comment type="catalytic activity">
    <reaction evidence="1">
        <text>N(2)-formyl-N(1)-(5-phospho-beta-D-ribosyl)glycinamide + L-glutamine + ATP + H2O = 2-formamido-N(1)-(5-O-phospho-beta-D-ribosyl)acetamidine + L-glutamate + ADP + phosphate + H(+)</text>
        <dbReference type="Rhea" id="RHEA:17129"/>
        <dbReference type="ChEBI" id="CHEBI:15377"/>
        <dbReference type="ChEBI" id="CHEBI:15378"/>
        <dbReference type="ChEBI" id="CHEBI:29985"/>
        <dbReference type="ChEBI" id="CHEBI:30616"/>
        <dbReference type="ChEBI" id="CHEBI:43474"/>
        <dbReference type="ChEBI" id="CHEBI:58359"/>
        <dbReference type="ChEBI" id="CHEBI:147286"/>
        <dbReference type="ChEBI" id="CHEBI:147287"/>
        <dbReference type="ChEBI" id="CHEBI:456216"/>
        <dbReference type="EC" id="6.3.5.3"/>
    </reaction>
</comment>
<comment type="pathway">
    <text evidence="1">Purine metabolism; IMP biosynthesis via de novo pathway; 5-amino-1-(5-phospho-D-ribosyl)imidazole from N(2)-formyl-N(1)-(5-phospho-D-ribosyl)glycinamide: step 1/2.</text>
</comment>
<comment type="subunit">
    <text evidence="1">Monomer.</text>
</comment>
<comment type="subcellular location">
    <subcellularLocation>
        <location evidence="1">Cytoplasm</location>
    </subcellularLocation>
</comment>
<comment type="similarity">
    <text evidence="1">In the N-terminal section; belongs to the FGAMS family.</text>
</comment>
<name>PUR4_VIBVU</name>
<reference key="1">
    <citation type="submission" date="2002-12" db="EMBL/GenBank/DDBJ databases">
        <title>Complete genome sequence of Vibrio vulnificus CMCP6.</title>
        <authorList>
            <person name="Rhee J.H."/>
            <person name="Kim S.Y."/>
            <person name="Chung S.S."/>
            <person name="Kim J.J."/>
            <person name="Moon Y.H."/>
            <person name="Jeong H."/>
            <person name="Choy H.E."/>
        </authorList>
    </citation>
    <scope>NUCLEOTIDE SEQUENCE [LARGE SCALE GENOMIC DNA]</scope>
    <source>
        <strain>CMCP6</strain>
    </source>
</reference>
<accession>Q8DF81</accession>
<keyword id="KW-0067">ATP-binding</keyword>
<keyword id="KW-0963">Cytoplasm</keyword>
<keyword id="KW-0315">Glutamine amidotransferase</keyword>
<keyword id="KW-0436">Ligase</keyword>
<keyword id="KW-0460">Magnesium</keyword>
<keyword id="KW-0479">Metal-binding</keyword>
<keyword id="KW-0547">Nucleotide-binding</keyword>
<keyword id="KW-0658">Purine biosynthesis</keyword>
<gene>
    <name evidence="1" type="primary">purL</name>
    <name type="ordered locus">VV1_0340</name>
</gene>
<proteinExistence type="inferred from homology"/>
<evidence type="ECO:0000255" key="1">
    <source>
        <dbReference type="HAMAP-Rule" id="MF_00419"/>
    </source>
</evidence>